<accession>A0KIT3</accession>
<name>GLPK_AERHH</name>
<protein>
    <recommendedName>
        <fullName evidence="1">Glycerol kinase</fullName>
        <ecNumber evidence="1">2.7.1.30</ecNumber>
    </recommendedName>
    <alternativeName>
        <fullName evidence="1">ATP:glycerol 3-phosphotransferase</fullName>
    </alternativeName>
    <alternativeName>
        <fullName evidence="1">Glycerokinase</fullName>
        <shortName evidence="1">GK</shortName>
    </alternativeName>
</protein>
<organism>
    <name type="scientific">Aeromonas hydrophila subsp. hydrophila (strain ATCC 7966 / DSM 30187 / BCRC 13018 / CCUG 14551 / JCM 1027 / KCTC 2358 / NCIMB 9240 / NCTC 8049)</name>
    <dbReference type="NCBI Taxonomy" id="380703"/>
    <lineage>
        <taxon>Bacteria</taxon>
        <taxon>Pseudomonadati</taxon>
        <taxon>Pseudomonadota</taxon>
        <taxon>Gammaproteobacteria</taxon>
        <taxon>Aeromonadales</taxon>
        <taxon>Aeromonadaceae</taxon>
        <taxon>Aeromonas</taxon>
    </lineage>
</organism>
<comment type="function">
    <text evidence="1">Key enzyme in the regulation of glycerol uptake and metabolism. Catalyzes the phosphorylation of glycerol to yield sn-glycerol 3-phosphate.</text>
</comment>
<comment type="catalytic activity">
    <reaction evidence="1">
        <text>glycerol + ATP = sn-glycerol 3-phosphate + ADP + H(+)</text>
        <dbReference type="Rhea" id="RHEA:21644"/>
        <dbReference type="ChEBI" id="CHEBI:15378"/>
        <dbReference type="ChEBI" id="CHEBI:17754"/>
        <dbReference type="ChEBI" id="CHEBI:30616"/>
        <dbReference type="ChEBI" id="CHEBI:57597"/>
        <dbReference type="ChEBI" id="CHEBI:456216"/>
        <dbReference type="EC" id="2.7.1.30"/>
    </reaction>
</comment>
<comment type="activity regulation">
    <text evidence="1">Inhibited by fructose 1,6-bisphosphate (FBP).</text>
</comment>
<comment type="pathway">
    <text evidence="1">Polyol metabolism; glycerol degradation via glycerol kinase pathway; sn-glycerol 3-phosphate from glycerol: step 1/1.</text>
</comment>
<comment type="similarity">
    <text evidence="1">Belongs to the FGGY kinase family.</text>
</comment>
<dbReference type="EC" id="2.7.1.30" evidence="1"/>
<dbReference type="EMBL" id="CP000462">
    <property type="protein sequence ID" value="ABK39532.1"/>
    <property type="molecule type" value="Genomic_DNA"/>
</dbReference>
<dbReference type="RefSeq" id="WP_011705539.1">
    <property type="nucleotide sequence ID" value="NC_008570.1"/>
</dbReference>
<dbReference type="RefSeq" id="YP_856184.1">
    <property type="nucleotide sequence ID" value="NC_008570.1"/>
</dbReference>
<dbReference type="SMR" id="A0KIT3"/>
<dbReference type="STRING" id="380703.AHA_1648"/>
<dbReference type="EnsemblBacteria" id="ABK39532">
    <property type="protein sequence ID" value="ABK39532"/>
    <property type="gene ID" value="AHA_1648"/>
</dbReference>
<dbReference type="GeneID" id="4491009"/>
<dbReference type="KEGG" id="aha:AHA_1648"/>
<dbReference type="PATRIC" id="fig|380703.7.peg.1660"/>
<dbReference type="eggNOG" id="COG0554">
    <property type="taxonomic scope" value="Bacteria"/>
</dbReference>
<dbReference type="HOGENOM" id="CLU_009281_2_3_6"/>
<dbReference type="OrthoDB" id="9805576at2"/>
<dbReference type="UniPathway" id="UPA00618">
    <property type="reaction ID" value="UER00672"/>
</dbReference>
<dbReference type="Proteomes" id="UP000000756">
    <property type="component" value="Chromosome"/>
</dbReference>
<dbReference type="GO" id="GO:0005829">
    <property type="term" value="C:cytosol"/>
    <property type="evidence" value="ECO:0007669"/>
    <property type="project" value="TreeGrafter"/>
</dbReference>
<dbReference type="GO" id="GO:0005524">
    <property type="term" value="F:ATP binding"/>
    <property type="evidence" value="ECO:0007669"/>
    <property type="project" value="UniProtKB-UniRule"/>
</dbReference>
<dbReference type="GO" id="GO:0004370">
    <property type="term" value="F:glycerol kinase activity"/>
    <property type="evidence" value="ECO:0000250"/>
    <property type="project" value="UniProtKB"/>
</dbReference>
<dbReference type="GO" id="GO:0019563">
    <property type="term" value="P:glycerol catabolic process"/>
    <property type="evidence" value="ECO:0007669"/>
    <property type="project" value="UniProtKB-UniRule"/>
</dbReference>
<dbReference type="GO" id="GO:0006071">
    <property type="term" value="P:glycerol metabolic process"/>
    <property type="evidence" value="ECO:0000250"/>
    <property type="project" value="UniProtKB"/>
</dbReference>
<dbReference type="GO" id="GO:0006072">
    <property type="term" value="P:glycerol-3-phosphate metabolic process"/>
    <property type="evidence" value="ECO:0007669"/>
    <property type="project" value="InterPro"/>
</dbReference>
<dbReference type="CDD" id="cd07786">
    <property type="entry name" value="FGGY_EcGK_like"/>
    <property type="match status" value="1"/>
</dbReference>
<dbReference type="FunFam" id="3.30.420.40:FF:000007">
    <property type="entry name" value="Glycerol kinase"/>
    <property type="match status" value="1"/>
</dbReference>
<dbReference type="FunFam" id="3.30.420.40:FF:000008">
    <property type="entry name" value="Glycerol kinase"/>
    <property type="match status" value="1"/>
</dbReference>
<dbReference type="Gene3D" id="3.30.420.40">
    <property type="match status" value="2"/>
</dbReference>
<dbReference type="HAMAP" id="MF_00186">
    <property type="entry name" value="Glycerol_kin"/>
    <property type="match status" value="1"/>
</dbReference>
<dbReference type="InterPro" id="IPR043129">
    <property type="entry name" value="ATPase_NBD"/>
</dbReference>
<dbReference type="InterPro" id="IPR000577">
    <property type="entry name" value="Carb_kinase_FGGY"/>
</dbReference>
<dbReference type="InterPro" id="IPR018483">
    <property type="entry name" value="Carb_kinase_FGGY_CS"/>
</dbReference>
<dbReference type="InterPro" id="IPR018485">
    <property type="entry name" value="FGGY_C"/>
</dbReference>
<dbReference type="InterPro" id="IPR018484">
    <property type="entry name" value="FGGY_N"/>
</dbReference>
<dbReference type="InterPro" id="IPR005999">
    <property type="entry name" value="Glycerol_kin"/>
</dbReference>
<dbReference type="NCBIfam" id="TIGR01311">
    <property type="entry name" value="glycerol_kin"/>
    <property type="match status" value="1"/>
</dbReference>
<dbReference type="NCBIfam" id="NF000756">
    <property type="entry name" value="PRK00047.1"/>
    <property type="match status" value="1"/>
</dbReference>
<dbReference type="PANTHER" id="PTHR10196:SF69">
    <property type="entry name" value="GLYCEROL KINASE"/>
    <property type="match status" value="1"/>
</dbReference>
<dbReference type="PANTHER" id="PTHR10196">
    <property type="entry name" value="SUGAR KINASE"/>
    <property type="match status" value="1"/>
</dbReference>
<dbReference type="Pfam" id="PF02782">
    <property type="entry name" value="FGGY_C"/>
    <property type="match status" value="1"/>
</dbReference>
<dbReference type="Pfam" id="PF00370">
    <property type="entry name" value="FGGY_N"/>
    <property type="match status" value="1"/>
</dbReference>
<dbReference type="PIRSF" id="PIRSF000538">
    <property type="entry name" value="GlpK"/>
    <property type="match status" value="1"/>
</dbReference>
<dbReference type="SUPFAM" id="SSF53067">
    <property type="entry name" value="Actin-like ATPase domain"/>
    <property type="match status" value="2"/>
</dbReference>
<dbReference type="PROSITE" id="PS00933">
    <property type="entry name" value="FGGY_KINASES_1"/>
    <property type="match status" value="1"/>
</dbReference>
<dbReference type="PROSITE" id="PS00445">
    <property type="entry name" value="FGGY_KINASES_2"/>
    <property type="match status" value="1"/>
</dbReference>
<feature type="chain" id="PRO_1000020693" description="Glycerol kinase">
    <location>
        <begin position="1"/>
        <end position="500"/>
    </location>
</feature>
<feature type="binding site" evidence="1">
    <location>
        <position position="15"/>
    </location>
    <ligand>
        <name>ADP</name>
        <dbReference type="ChEBI" id="CHEBI:456216"/>
    </ligand>
</feature>
<feature type="binding site" evidence="1">
    <location>
        <position position="15"/>
    </location>
    <ligand>
        <name>ATP</name>
        <dbReference type="ChEBI" id="CHEBI:30616"/>
    </ligand>
</feature>
<feature type="binding site" evidence="1">
    <location>
        <position position="15"/>
    </location>
    <ligand>
        <name>sn-glycerol 3-phosphate</name>
        <dbReference type="ChEBI" id="CHEBI:57597"/>
    </ligand>
</feature>
<feature type="binding site" evidence="1">
    <location>
        <position position="16"/>
    </location>
    <ligand>
        <name>ATP</name>
        <dbReference type="ChEBI" id="CHEBI:30616"/>
    </ligand>
</feature>
<feature type="binding site" evidence="1">
    <location>
        <position position="17"/>
    </location>
    <ligand>
        <name>ATP</name>
        <dbReference type="ChEBI" id="CHEBI:30616"/>
    </ligand>
</feature>
<feature type="binding site" evidence="1">
    <location>
        <position position="19"/>
    </location>
    <ligand>
        <name>ADP</name>
        <dbReference type="ChEBI" id="CHEBI:456216"/>
    </ligand>
</feature>
<feature type="binding site" evidence="1">
    <location>
        <position position="85"/>
    </location>
    <ligand>
        <name>glycerol</name>
        <dbReference type="ChEBI" id="CHEBI:17754"/>
    </ligand>
</feature>
<feature type="binding site" evidence="1">
    <location>
        <position position="85"/>
    </location>
    <ligand>
        <name>sn-glycerol 3-phosphate</name>
        <dbReference type="ChEBI" id="CHEBI:57597"/>
    </ligand>
</feature>
<feature type="binding site" evidence="1">
    <location>
        <position position="86"/>
    </location>
    <ligand>
        <name>glycerol</name>
        <dbReference type="ChEBI" id="CHEBI:17754"/>
    </ligand>
</feature>
<feature type="binding site" evidence="1">
    <location>
        <position position="86"/>
    </location>
    <ligand>
        <name>sn-glycerol 3-phosphate</name>
        <dbReference type="ChEBI" id="CHEBI:57597"/>
    </ligand>
</feature>
<feature type="binding site" evidence="1">
    <location>
        <position position="137"/>
    </location>
    <ligand>
        <name>glycerol</name>
        <dbReference type="ChEBI" id="CHEBI:17754"/>
    </ligand>
</feature>
<feature type="binding site" evidence="1">
    <location>
        <position position="137"/>
    </location>
    <ligand>
        <name>sn-glycerol 3-phosphate</name>
        <dbReference type="ChEBI" id="CHEBI:57597"/>
    </ligand>
</feature>
<feature type="binding site" evidence="1">
    <location>
        <position position="245"/>
    </location>
    <ligand>
        <name>glycerol</name>
        <dbReference type="ChEBI" id="CHEBI:17754"/>
    </ligand>
</feature>
<feature type="binding site" evidence="1">
    <location>
        <position position="245"/>
    </location>
    <ligand>
        <name>sn-glycerol 3-phosphate</name>
        <dbReference type="ChEBI" id="CHEBI:57597"/>
    </ligand>
</feature>
<feature type="binding site" evidence="1">
    <location>
        <position position="246"/>
    </location>
    <ligand>
        <name>glycerol</name>
        <dbReference type="ChEBI" id="CHEBI:17754"/>
    </ligand>
</feature>
<feature type="binding site" evidence="1">
    <location>
        <position position="267"/>
    </location>
    <ligand>
        <name>ADP</name>
        <dbReference type="ChEBI" id="CHEBI:456216"/>
    </ligand>
</feature>
<feature type="binding site" evidence="1">
    <location>
        <position position="267"/>
    </location>
    <ligand>
        <name>ATP</name>
        <dbReference type="ChEBI" id="CHEBI:30616"/>
    </ligand>
</feature>
<feature type="binding site" evidence="1">
    <location>
        <position position="310"/>
    </location>
    <ligand>
        <name>ADP</name>
        <dbReference type="ChEBI" id="CHEBI:456216"/>
    </ligand>
</feature>
<feature type="binding site" evidence="1">
    <location>
        <position position="310"/>
    </location>
    <ligand>
        <name>ATP</name>
        <dbReference type="ChEBI" id="CHEBI:30616"/>
    </ligand>
</feature>
<feature type="binding site" evidence="1">
    <location>
        <position position="314"/>
    </location>
    <ligand>
        <name>ATP</name>
        <dbReference type="ChEBI" id="CHEBI:30616"/>
    </ligand>
</feature>
<feature type="binding site" evidence="1">
    <location>
        <position position="411"/>
    </location>
    <ligand>
        <name>ADP</name>
        <dbReference type="ChEBI" id="CHEBI:456216"/>
    </ligand>
</feature>
<feature type="binding site" evidence="1">
    <location>
        <position position="411"/>
    </location>
    <ligand>
        <name>ATP</name>
        <dbReference type="ChEBI" id="CHEBI:30616"/>
    </ligand>
</feature>
<feature type="binding site" evidence="1">
    <location>
        <position position="415"/>
    </location>
    <ligand>
        <name>ADP</name>
        <dbReference type="ChEBI" id="CHEBI:456216"/>
    </ligand>
</feature>
<sequence length="500" mass="55576">MSAEKKYVVALDQGTTSSRAIVFDQDANIVGTSQREFTQHYPKAGWVEHDPMEIWATQSSVFTEVLAKTGLRSEEIAAIGITNQRETTVVWEKATGKPIYNAIVWQCRRTAAICEELKARGLEEYVRENTGLVLDAYFSGTKVKWILDNVEGAREKAMNGELLFGTIDTWLVWKMTNGEVHVTDPTNASRTMLYNIRDLKWDQKMLDELGIPMSMLPQVKPSSEVYGYTTRGGGSRIPIAGIAGDQQSALFGQLCFEKGMAKNTYGTGCFMLMNTGTEPVRSNNGLLTTVAIGPKGEVNYALEGAVFMGGATIQWLRDELKIIHDARDTDYFASKVGDTNGVYLVPAFVGLGAPYWDPYARGTMVGLTRGANRNHIIRAALESIAYQSRDVLDAMQQDSGIKLAALKVDGGAVANDFLMQFQADMMHTPVVRPTRIETTAMGAAFLAGLAVGFWKSSEELEDKFSVDREFIPQMDRDDRAKRYNGWKKAVERSRRWAEEE</sequence>
<gene>
    <name evidence="1" type="primary">glpK</name>
    <name type="ordered locus">AHA_1648</name>
</gene>
<keyword id="KW-0067">ATP-binding</keyword>
<keyword id="KW-0319">Glycerol metabolism</keyword>
<keyword id="KW-0418">Kinase</keyword>
<keyword id="KW-0547">Nucleotide-binding</keyword>
<keyword id="KW-1185">Reference proteome</keyword>
<keyword id="KW-0808">Transferase</keyword>
<proteinExistence type="inferred from homology"/>
<evidence type="ECO:0000255" key="1">
    <source>
        <dbReference type="HAMAP-Rule" id="MF_00186"/>
    </source>
</evidence>
<reference key="1">
    <citation type="journal article" date="2006" name="J. Bacteriol.">
        <title>Genome sequence of Aeromonas hydrophila ATCC 7966T: jack of all trades.</title>
        <authorList>
            <person name="Seshadri R."/>
            <person name="Joseph S.W."/>
            <person name="Chopra A.K."/>
            <person name="Sha J."/>
            <person name="Shaw J."/>
            <person name="Graf J."/>
            <person name="Haft D.H."/>
            <person name="Wu M."/>
            <person name="Ren Q."/>
            <person name="Rosovitz M.J."/>
            <person name="Madupu R."/>
            <person name="Tallon L."/>
            <person name="Kim M."/>
            <person name="Jin S."/>
            <person name="Vuong H."/>
            <person name="Stine O.C."/>
            <person name="Ali A."/>
            <person name="Horneman A.J."/>
            <person name="Heidelberg J.F."/>
        </authorList>
    </citation>
    <scope>NUCLEOTIDE SEQUENCE [LARGE SCALE GENOMIC DNA]</scope>
    <source>
        <strain>ATCC 7966 / DSM 30187 / BCRC 13018 / CCUG 14551 / JCM 1027 / KCTC 2358 / NCIMB 9240 / NCTC 8049</strain>
    </source>
</reference>